<name>COW4_CONAO</name>
<evidence type="ECO:0000250" key="1">
    <source>
        <dbReference type="UniProtKB" id="P0C248"/>
    </source>
</evidence>
<evidence type="ECO:0000250" key="2">
    <source>
        <dbReference type="UniProtKB" id="P0C250"/>
    </source>
</evidence>
<evidence type="ECO:0000250" key="3">
    <source>
        <dbReference type="UniProtKB" id="P62903"/>
    </source>
</evidence>
<evidence type="ECO:0000250" key="4">
    <source>
        <dbReference type="UniProtKB" id="P83047"/>
    </source>
</evidence>
<evidence type="ECO:0000269" key="5">
    <source>
    </source>
</evidence>
<evidence type="ECO:0000303" key="6">
    <source>
    </source>
</evidence>
<evidence type="ECO:0000305" key="7"/>
<evidence type="ECO:0000305" key="8">
    <source>
    </source>
</evidence>
<reference key="1">
    <citation type="journal article" date="2017" name="J. Proteome Res.">
        <title>Contryphan genes and mature peptides in the venom of nine cone snail species by transcriptomic and mass spectrometric analysis.</title>
        <authorList>
            <person name="Vijayasarathy M."/>
            <person name="Basheer S.M."/>
            <person name="Franklin J.B."/>
            <person name="Balaram P."/>
        </authorList>
    </citation>
    <scope>PROTEIN SEQUENCE</scope>
    <scope>IDENTIFICATION BY MASS SPECTROMETRY</scope>
    <scope>MASS SPECTROMETRY</scope>
    <scope>SUBCELLULAR LOCATION</scope>
    <scope>DISULFIDE BOND</scope>
    <scope>D-AMINO ACID AT TRP-6</scope>
    <scope>AMIDATION AT CYS-10</scope>
    <scope>GAMMA-CARBOXYGLUTAMATION AT GLU-3</scope>
    <source>
        <tissue>Venom</tissue>
    </source>
</reference>
<keyword id="KW-0027">Amidation</keyword>
<keyword id="KW-0208">D-amino acid</keyword>
<keyword id="KW-0903">Direct protein sequencing</keyword>
<keyword id="KW-1015">Disulfide bond</keyword>
<keyword id="KW-0301">Gamma-carboxyglutamic acid</keyword>
<keyword id="KW-0872">Ion channel impairing toxin</keyword>
<keyword id="KW-0528">Neurotoxin</keyword>
<keyword id="KW-0964">Secreted</keyword>
<keyword id="KW-0800">Toxin</keyword>
<dbReference type="GO" id="GO:0005576">
    <property type="term" value="C:extracellular region"/>
    <property type="evidence" value="ECO:0007669"/>
    <property type="project" value="UniProtKB-SubCell"/>
</dbReference>
<dbReference type="GO" id="GO:0099106">
    <property type="term" value="F:ion channel regulator activity"/>
    <property type="evidence" value="ECO:0007669"/>
    <property type="project" value="UniProtKB-KW"/>
</dbReference>
<dbReference type="GO" id="GO:0090729">
    <property type="term" value="F:toxin activity"/>
    <property type="evidence" value="ECO:0007669"/>
    <property type="project" value="UniProtKB-KW"/>
</dbReference>
<dbReference type="InterPro" id="IPR011062">
    <property type="entry name" value="Contryphan_CS"/>
</dbReference>
<dbReference type="PROSITE" id="PS60027">
    <property type="entry name" value="CONTRYPHAN"/>
    <property type="match status" value="1"/>
</dbReference>
<accession>P0DPQ1</accession>
<comment type="function">
    <text evidence="1 2 3 4">Its target is unknown, but this toxin may modulate voltage-activated calcium channels (Cav) or calcium-dependent potassium channels (KCa).</text>
</comment>
<comment type="subcellular location">
    <subcellularLocation>
        <location evidence="5">Secreted</location>
    </subcellularLocation>
</comment>
<comment type="tissue specificity">
    <text evidence="8">Expressed by the venom duct.</text>
</comment>
<comment type="domain">
    <text evidence="7">The cysteine framework is C-C.</text>
</comment>
<comment type="mass spectrometry" mass="1313.56" method="MALDI" evidence="5">
    <text>Monoisotopic mass, Ar1313 (gamma-carboxylated).</text>
</comment>
<comment type="similarity">
    <text evidence="7">Belongs to the O2 superfamily. Contryphan family.</text>
</comment>
<protein>
    <recommendedName>
        <fullName evidence="7">Contryphan-Ar4</fullName>
    </recommendedName>
    <alternativeName>
        <fullName evidence="6">Ar1313</fullName>
    </alternativeName>
</protein>
<organism>
    <name type="scientific">Conus araneosus</name>
    <name type="common">Cobweb cone</name>
    <dbReference type="NCBI Taxonomy" id="101286"/>
    <lineage>
        <taxon>Eukaryota</taxon>
        <taxon>Metazoa</taxon>
        <taxon>Spiralia</taxon>
        <taxon>Lophotrochozoa</taxon>
        <taxon>Mollusca</taxon>
        <taxon>Gastropoda</taxon>
        <taxon>Caenogastropoda</taxon>
        <taxon>Neogastropoda</taxon>
        <taxon>Conoidea</taxon>
        <taxon>Conidae</taxon>
        <taxon>Conus</taxon>
    </lineage>
</organism>
<feature type="peptide" id="PRO_0000445128" description="Contryphan-Ar4" evidence="5">
    <location>
        <begin position="1"/>
        <end position="10"/>
    </location>
</feature>
<feature type="modified residue" description="4-carboxyglutamate" evidence="8">
    <location>
        <position position="3"/>
    </location>
</feature>
<feature type="modified residue" description="D-tryptophan" evidence="8">
    <location>
        <position position="6"/>
    </location>
</feature>
<feature type="modified residue" description="Cysteine amide" evidence="5">
    <location>
        <position position="10"/>
    </location>
</feature>
<feature type="disulfide bond" evidence="5">
    <location>
        <begin position="4"/>
        <end position="10"/>
    </location>
</feature>
<proteinExistence type="evidence at protein level"/>
<sequence length="10" mass="1273">ESECPWHPWC</sequence>